<accession>O57839</accession>
<protein>
    <recommendedName>
        <fullName evidence="3">Agmatinase</fullName>
        <ecNumber evidence="2">3.5.3.11</ecNumber>
    </recommendedName>
</protein>
<evidence type="ECO:0000250" key="1">
    <source>
        <dbReference type="UniProtKB" id="P0DJQ3"/>
    </source>
</evidence>
<evidence type="ECO:0000269" key="2">
    <source>
    </source>
</evidence>
<evidence type="ECO:0000303" key="3">
    <source>
    </source>
</evidence>
<evidence type="ECO:0000305" key="4"/>
<evidence type="ECO:0000305" key="5">
    <source>
    </source>
</evidence>
<evidence type="ECO:0000312" key="6">
    <source>
        <dbReference type="EMBL" id="BAA29152.1"/>
    </source>
</evidence>
<reference key="1">
    <citation type="journal article" date="1998" name="DNA Res.">
        <title>Complete sequence and gene organization of the genome of a hyper-thermophilic archaebacterium, Pyrococcus horikoshii OT3.</title>
        <authorList>
            <person name="Kawarabayasi Y."/>
            <person name="Sawada M."/>
            <person name="Horikawa H."/>
            <person name="Haikawa Y."/>
            <person name="Hino Y."/>
            <person name="Yamamoto S."/>
            <person name="Sekine M."/>
            <person name="Baba S."/>
            <person name="Kosugi H."/>
            <person name="Hosoyama A."/>
            <person name="Nagai Y."/>
            <person name="Sakai M."/>
            <person name="Ogura K."/>
            <person name="Otsuka R."/>
            <person name="Nakazawa H."/>
            <person name="Takamiya M."/>
            <person name="Ohfuku Y."/>
            <person name="Funahashi T."/>
            <person name="Tanaka T."/>
            <person name="Kudoh Y."/>
            <person name="Yamazaki J."/>
            <person name="Kushida N."/>
            <person name="Oguchi A."/>
            <person name="Aoki K."/>
            <person name="Yoshizawa T."/>
            <person name="Nakamura Y."/>
            <person name="Robb F.T."/>
            <person name="Horikoshi K."/>
            <person name="Masuchi Y."/>
            <person name="Shizuya H."/>
            <person name="Kikuchi H."/>
        </authorList>
    </citation>
    <scope>NUCLEOTIDE SEQUENCE [LARGE SCALE GENOMIC DNA]</scope>
    <source>
        <strain>ATCC 700860 / DSM 12428 / JCM 9974 / NBRC 100139 / OT-3</strain>
    </source>
</reference>
<reference key="2">
    <citation type="journal article" date="2005" name="Biochim. Biophys. Acta">
        <title>The first archaeal agmatinase from anaerobic hyperthermophilic archaeon Pyrococcus horikoshii: cloning, expression, and characterization.</title>
        <authorList>
            <person name="Goda S."/>
            <person name="Sakuraba H."/>
            <person name="Kawarabayasi Y."/>
            <person name="Ohshima T."/>
        </authorList>
    </citation>
    <scope>FUNCTION</scope>
    <scope>CATALYTIC ACTIVITY</scope>
    <scope>COFACTOR</scope>
    <scope>ACTIVITY REGULATION</scope>
    <scope>BIOPHYSICOCHEMICAL PROPERTIES</scope>
    <scope>PATHWAY</scope>
    <scope>SUBUNIT</scope>
</reference>
<sequence length="283" mass="31445">MLLYTYRSFDMELPTVDIKDADYIILGLPFDGTTSYKPGARFGPVLIRQATLNLESYILDYDIDIAELKIADAGDVALPVSIEDAIKVAVETIKEVRSINPRALPIFLGGEHSMTYPPVKVLEPKSYVVFDAHLDLRDSYQGSRFNHACVARRIHEMGVKVAIFGVRSGTREEVMFASQSGIEWVHARDYNFDAFVDLVSSLPEPVYVSIDVDVFDLPLVPETGTPEPGGLGFWEVIEALEWLTKRKKVAGFDIMEVSGDRLGNSTSITAAKLLFYVIGMSAR</sequence>
<dbReference type="EC" id="3.5.3.11" evidence="2"/>
<dbReference type="EMBL" id="BA000001">
    <property type="protein sequence ID" value="BAA29152.1"/>
    <property type="molecule type" value="Genomic_DNA"/>
</dbReference>
<dbReference type="PIR" id="A71228">
    <property type="entry name" value="A71228"/>
</dbReference>
<dbReference type="RefSeq" id="WP_010884203.1">
    <property type="nucleotide sequence ID" value="NC_000961.1"/>
</dbReference>
<dbReference type="SMR" id="O57839"/>
<dbReference type="STRING" id="70601.gene:9376991"/>
<dbReference type="EnsemblBacteria" id="BAA29152">
    <property type="protein sequence ID" value="BAA29152"/>
    <property type="gene ID" value="BAA29152"/>
</dbReference>
<dbReference type="GeneID" id="1443985"/>
<dbReference type="KEGG" id="pho:PH0083"/>
<dbReference type="eggNOG" id="arCOG01700">
    <property type="taxonomic scope" value="Archaea"/>
</dbReference>
<dbReference type="OrthoDB" id="7186at2157"/>
<dbReference type="UniPathway" id="UPA00534">
    <property type="reaction ID" value="UER00287"/>
</dbReference>
<dbReference type="Proteomes" id="UP000000752">
    <property type="component" value="Chromosome"/>
</dbReference>
<dbReference type="GO" id="GO:0008783">
    <property type="term" value="F:agmatinase activity"/>
    <property type="evidence" value="ECO:0007669"/>
    <property type="project" value="UniProtKB-EC"/>
</dbReference>
<dbReference type="GO" id="GO:0046872">
    <property type="term" value="F:metal ion binding"/>
    <property type="evidence" value="ECO:0007669"/>
    <property type="project" value="UniProtKB-KW"/>
</dbReference>
<dbReference type="GO" id="GO:0033389">
    <property type="term" value="P:putrescine biosynthetic process from arginine, via agmatine"/>
    <property type="evidence" value="ECO:0007669"/>
    <property type="project" value="TreeGrafter"/>
</dbReference>
<dbReference type="CDD" id="cd11593">
    <property type="entry name" value="Agmatinase-like_2"/>
    <property type="match status" value="1"/>
</dbReference>
<dbReference type="Gene3D" id="3.40.800.10">
    <property type="entry name" value="Ureohydrolase domain"/>
    <property type="match status" value="1"/>
</dbReference>
<dbReference type="InterPro" id="IPR005925">
    <property type="entry name" value="Agmatinase-rel"/>
</dbReference>
<dbReference type="InterPro" id="IPR006035">
    <property type="entry name" value="Ureohydrolase"/>
</dbReference>
<dbReference type="InterPro" id="IPR023696">
    <property type="entry name" value="Ureohydrolase_dom_sf"/>
</dbReference>
<dbReference type="NCBIfam" id="TIGR01230">
    <property type="entry name" value="agmatinase"/>
    <property type="match status" value="1"/>
</dbReference>
<dbReference type="PANTHER" id="PTHR11358">
    <property type="entry name" value="ARGINASE/AGMATINASE"/>
    <property type="match status" value="1"/>
</dbReference>
<dbReference type="PANTHER" id="PTHR11358:SF26">
    <property type="entry name" value="GUANIDINO ACID HYDROLASE, MITOCHONDRIAL"/>
    <property type="match status" value="1"/>
</dbReference>
<dbReference type="Pfam" id="PF00491">
    <property type="entry name" value="Arginase"/>
    <property type="match status" value="1"/>
</dbReference>
<dbReference type="PIRSF" id="PIRSF036979">
    <property type="entry name" value="Arginase"/>
    <property type="match status" value="1"/>
</dbReference>
<dbReference type="SUPFAM" id="SSF52768">
    <property type="entry name" value="Arginase/deacetylase"/>
    <property type="match status" value="1"/>
</dbReference>
<dbReference type="PROSITE" id="PS51409">
    <property type="entry name" value="ARGINASE_2"/>
    <property type="match status" value="1"/>
</dbReference>
<comment type="function">
    <text evidence="2">Catalyzes the formation of putrescine from agmatine. Cannot use arginine.</text>
</comment>
<comment type="catalytic activity">
    <reaction evidence="2">
        <text>agmatine + H2O = urea + putrescine</text>
        <dbReference type="Rhea" id="RHEA:13929"/>
        <dbReference type="ChEBI" id="CHEBI:15377"/>
        <dbReference type="ChEBI" id="CHEBI:16199"/>
        <dbReference type="ChEBI" id="CHEBI:58145"/>
        <dbReference type="ChEBI" id="CHEBI:326268"/>
        <dbReference type="EC" id="3.5.3.11"/>
    </reaction>
</comment>
<comment type="cofactor">
    <cofactor evidence="2">
        <name>a divalent metal cation</name>
        <dbReference type="ChEBI" id="CHEBI:60240"/>
    </cofactor>
    <text evidence="1 2">Binds 2 divalent metal cations per subunit (By similarity). Co(2+) is the most effection cation. Can also use Ca(2+), Mn(2+), Zn(2+) or Mg(2+) (PubMed:15752699).</text>
</comment>
<comment type="activity regulation">
    <text evidence="2">Inhibited by putrescine. Activity is not affected by arginine and ornithine.</text>
</comment>
<comment type="biophysicochemical properties">
    <kinetics>
        <KM evidence="2">0.53 mM for agmatine</KM>
    </kinetics>
    <phDependence>
        <text evidence="2">Optimum pH is 11.0.</text>
    </phDependence>
    <temperatureDependence>
        <text evidence="2">Optimum temperature is 100 degrees Celsius.</text>
    </temperatureDependence>
</comment>
<comment type="pathway">
    <text evidence="5">Amine and polyamine biosynthesis; putrescine biosynthesis via agmatine pathway; putrescine from agmatine: step 1/1.</text>
</comment>
<comment type="subunit">
    <text evidence="2">Homotetramer.</text>
</comment>
<comment type="similarity">
    <text evidence="4">Belongs to the arginase family. Agmatinase subfamily.</text>
</comment>
<proteinExistence type="evidence at protein level"/>
<feature type="chain" id="PRO_0000448918" description="Agmatinase">
    <location>
        <begin position="1"/>
        <end position="283"/>
    </location>
</feature>
<feature type="binding site" evidence="1">
    <location>
        <position position="112"/>
    </location>
    <ligand>
        <name>a divalent metal cation</name>
        <dbReference type="ChEBI" id="CHEBI:60240"/>
        <label>1</label>
    </ligand>
</feature>
<feature type="binding site" evidence="1">
    <location>
        <position position="131"/>
    </location>
    <ligand>
        <name>a divalent metal cation</name>
        <dbReference type="ChEBI" id="CHEBI:60240"/>
        <label>1</label>
    </ligand>
</feature>
<feature type="binding site" evidence="1">
    <location>
        <position position="131"/>
    </location>
    <ligand>
        <name>a divalent metal cation</name>
        <dbReference type="ChEBI" id="CHEBI:60240"/>
        <label>2</label>
    </ligand>
</feature>
<feature type="binding site" evidence="1">
    <location>
        <position position="133"/>
    </location>
    <ligand>
        <name>a divalent metal cation</name>
        <dbReference type="ChEBI" id="CHEBI:60240"/>
        <label>2</label>
    </ligand>
</feature>
<feature type="binding site" evidence="1">
    <location>
        <position position="135"/>
    </location>
    <ligand>
        <name>a divalent metal cation</name>
        <dbReference type="ChEBI" id="CHEBI:60240"/>
        <label>1</label>
    </ligand>
</feature>
<feature type="binding site" evidence="1">
    <location>
        <position position="211"/>
    </location>
    <ligand>
        <name>a divalent metal cation</name>
        <dbReference type="ChEBI" id="CHEBI:60240"/>
        <label>1</label>
    </ligand>
</feature>
<feature type="binding site" evidence="1">
    <location>
        <position position="211"/>
    </location>
    <ligand>
        <name>a divalent metal cation</name>
        <dbReference type="ChEBI" id="CHEBI:60240"/>
        <label>2</label>
    </ligand>
</feature>
<feature type="binding site" evidence="1">
    <location>
        <position position="213"/>
    </location>
    <ligand>
        <name>a divalent metal cation</name>
        <dbReference type="ChEBI" id="CHEBI:60240"/>
        <label>2</label>
    </ligand>
</feature>
<keyword id="KW-0378">Hydrolase</keyword>
<keyword id="KW-0479">Metal-binding</keyword>
<keyword id="KW-0661">Putrescine biosynthesis</keyword>
<name>AGMT_PYRHO</name>
<gene>
    <name evidence="6" type="ordered locus">PH0083</name>
</gene>
<organism>
    <name type="scientific">Pyrococcus horikoshii (strain ATCC 700860 / DSM 12428 / JCM 9974 / NBRC 100139 / OT-3)</name>
    <dbReference type="NCBI Taxonomy" id="70601"/>
    <lineage>
        <taxon>Archaea</taxon>
        <taxon>Methanobacteriati</taxon>
        <taxon>Methanobacteriota</taxon>
        <taxon>Thermococci</taxon>
        <taxon>Thermococcales</taxon>
        <taxon>Thermococcaceae</taxon>
        <taxon>Pyrococcus</taxon>
    </lineage>
</organism>